<keyword id="KW-0002">3D-structure</keyword>
<keyword id="KW-0963">Cytoplasm</keyword>
<keyword id="KW-0903">Direct protein sequencing</keyword>
<keyword id="KW-1017">Isopeptide bond</keyword>
<keyword id="KW-0539">Nucleus</keyword>
<keyword id="KW-0597">Phosphoprotein</keyword>
<keyword id="KW-1185">Reference proteome</keyword>
<keyword id="KW-0687">Ribonucleoprotein</keyword>
<keyword id="KW-0689">Ribosomal protein</keyword>
<keyword id="KW-0694">RNA-binding</keyword>
<keyword id="KW-0699">rRNA-binding</keyword>
<keyword id="KW-0832">Ubl conjugation</keyword>
<protein>
    <recommendedName>
        <fullName evidence="5">Large ribosomal subunit protein uL18</fullName>
    </recommendedName>
    <alternativeName>
        <fullName evidence="6">60S ribosomal protein L5</fullName>
    </alternativeName>
    <alternativeName>
        <fullName>L1</fullName>
    </alternativeName>
    <alternativeName>
        <fullName>L1a</fullName>
    </alternativeName>
    <alternativeName>
        <fullName>Ribosomal 5S RNA-binding protein</fullName>
    </alternativeName>
    <alternativeName>
        <fullName>YL3</fullName>
    </alternativeName>
</protein>
<gene>
    <name evidence="6" type="primary">RPL5</name>
    <name type="synonym">RPL1</name>
    <name type="synonym">RPL1A</name>
    <name type="ordered locus">YPL131W</name>
    <name type="ORF">LPI14W</name>
</gene>
<organism>
    <name type="scientific">Saccharomyces cerevisiae (strain ATCC 204508 / S288c)</name>
    <name type="common">Baker's yeast</name>
    <dbReference type="NCBI Taxonomy" id="559292"/>
    <lineage>
        <taxon>Eukaryota</taxon>
        <taxon>Fungi</taxon>
        <taxon>Dikarya</taxon>
        <taxon>Ascomycota</taxon>
        <taxon>Saccharomycotina</taxon>
        <taxon>Saccharomycetes</taxon>
        <taxon>Saccharomycetales</taxon>
        <taxon>Saccharomycetaceae</taxon>
        <taxon>Saccharomyces</taxon>
    </lineage>
</organism>
<sequence>MAFQKDAKSSAYSSRFQTPFRRRREGKTDYYQRKRLVTQHKAKYNTPKYRLVVRFTNKDIICQIISSTITGDVVLAAAYSHELPRYGITHGLTNWAAAYATGLLIARRTLQKLGLDETYKGVEEVEGEYELTEAVEDGPRPFKVFLDIGLQRTTTGARVFGALKGASDGGLYVPHSENRFPGWDFETEEIDPELLRSYIFGGHVSQYMEELADDDEERFSELFKGYLADDIDADSLEDIYTSAHEAIRADPAFKPTEKKFTKEQYAAESKKYRQTKLSKEERAARVAAKIAALAGQQ</sequence>
<evidence type="ECO:0000269" key="1">
    <source>
    </source>
</evidence>
<evidence type="ECO:0000269" key="2">
    <source>
    </source>
</evidence>
<evidence type="ECO:0000269" key="3">
    <source>
    </source>
</evidence>
<evidence type="ECO:0000269" key="4">
    <source>
    </source>
</evidence>
<evidence type="ECO:0000303" key="5">
    <source>
    </source>
</evidence>
<evidence type="ECO:0000303" key="6">
    <source>
    </source>
</evidence>
<evidence type="ECO:0000305" key="7"/>
<evidence type="ECO:0000305" key="8">
    <source>
    </source>
</evidence>
<evidence type="ECO:0000305" key="9">
    <source>
    </source>
</evidence>
<evidence type="ECO:0007744" key="10">
    <source>
    </source>
</evidence>
<evidence type="ECO:0007744" key="11">
    <source>
    </source>
</evidence>
<evidence type="ECO:0007744" key="12">
    <source>
    </source>
</evidence>
<evidence type="ECO:0007829" key="13">
    <source>
        <dbReference type="PDB" id="4U3U"/>
    </source>
</evidence>
<evidence type="ECO:0007829" key="14">
    <source>
        <dbReference type="PDB" id="4U4R"/>
    </source>
</evidence>
<evidence type="ECO:0007829" key="15">
    <source>
        <dbReference type="PDB" id="4U4U"/>
    </source>
</evidence>
<proteinExistence type="evidence at protein level"/>
<accession>P26321</accession>
<accession>D6W3N6</accession>
<name>RL5_YEAST</name>
<dbReference type="EMBL" id="M65056">
    <property type="protein sequence ID" value="AAA35234.1"/>
    <property type="molecule type" value="Genomic_DNA"/>
</dbReference>
<dbReference type="EMBL" id="M94864">
    <property type="protein sequence ID" value="AAA35236.1"/>
    <property type="molecule type" value="Genomic_DNA"/>
</dbReference>
<dbReference type="EMBL" id="L01796">
    <property type="protein sequence ID" value="AAA34979.1"/>
    <property type="molecule type" value="Genomic_DNA"/>
</dbReference>
<dbReference type="EMBL" id="U43703">
    <property type="protein sequence ID" value="AAB68228.1"/>
    <property type="molecule type" value="Genomic_DNA"/>
</dbReference>
<dbReference type="EMBL" id="BK006949">
    <property type="protein sequence ID" value="DAA11302.1"/>
    <property type="molecule type" value="Genomic_DNA"/>
</dbReference>
<dbReference type="PIR" id="S42144">
    <property type="entry name" value="S42144"/>
</dbReference>
<dbReference type="RefSeq" id="NP_015194.1">
    <property type="nucleotide sequence ID" value="NM_001183945.1"/>
</dbReference>
<dbReference type="PDB" id="3J6X">
    <property type="method" value="EM"/>
    <property type="resolution" value="6.10 A"/>
    <property type="chains" value="L5=1-297"/>
</dbReference>
<dbReference type="PDB" id="3J6Y">
    <property type="method" value="EM"/>
    <property type="resolution" value="6.10 A"/>
    <property type="chains" value="L5=1-297"/>
</dbReference>
<dbReference type="PDB" id="3J77">
    <property type="method" value="EM"/>
    <property type="resolution" value="6.20 A"/>
    <property type="chains" value="L5=1-297"/>
</dbReference>
<dbReference type="PDB" id="3J78">
    <property type="method" value="EM"/>
    <property type="resolution" value="6.30 A"/>
    <property type="chains" value="L5=1-297"/>
</dbReference>
<dbReference type="PDB" id="3JCT">
    <property type="method" value="EM"/>
    <property type="resolution" value="3.08 A"/>
    <property type="chains" value="D=1-297"/>
</dbReference>
<dbReference type="PDB" id="4U3M">
    <property type="method" value="X-ray"/>
    <property type="resolution" value="3.00 A"/>
    <property type="chains" value="L5/l5=2-297"/>
</dbReference>
<dbReference type="PDB" id="4U3N">
    <property type="method" value="X-ray"/>
    <property type="resolution" value="3.20 A"/>
    <property type="chains" value="L5/l5=2-297"/>
</dbReference>
<dbReference type="PDB" id="4U3U">
    <property type="method" value="X-ray"/>
    <property type="resolution" value="2.90 A"/>
    <property type="chains" value="L5/l5=2-297"/>
</dbReference>
<dbReference type="PDB" id="4U4N">
    <property type="method" value="X-ray"/>
    <property type="resolution" value="3.10 A"/>
    <property type="chains" value="L5/l5=2-297"/>
</dbReference>
<dbReference type="PDB" id="4U4O">
    <property type="method" value="X-ray"/>
    <property type="resolution" value="3.60 A"/>
    <property type="chains" value="L5/l5=2-297"/>
</dbReference>
<dbReference type="PDB" id="4U4Q">
    <property type="method" value="X-ray"/>
    <property type="resolution" value="3.00 A"/>
    <property type="chains" value="L5/l5=2-297"/>
</dbReference>
<dbReference type="PDB" id="4U4R">
    <property type="method" value="X-ray"/>
    <property type="resolution" value="2.80 A"/>
    <property type="chains" value="L5/l5=2-297"/>
</dbReference>
<dbReference type="PDB" id="4U4U">
    <property type="method" value="X-ray"/>
    <property type="resolution" value="3.00 A"/>
    <property type="chains" value="L5/l5=2-297"/>
</dbReference>
<dbReference type="PDB" id="4U4Y">
    <property type="method" value="X-ray"/>
    <property type="resolution" value="3.20 A"/>
    <property type="chains" value="L5/l5=2-297"/>
</dbReference>
<dbReference type="PDB" id="4U4Z">
    <property type="method" value="X-ray"/>
    <property type="resolution" value="3.10 A"/>
    <property type="chains" value="L5/l5=2-297"/>
</dbReference>
<dbReference type="PDB" id="4U50">
    <property type="method" value="X-ray"/>
    <property type="resolution" value="3.20 A"/>
    <property type="chains" value="L5/l5=2-297"/>
</dbReference>
<dbReference type="PDB" id="4U51">
    <property type="method" value="X-ray"/>
    <property type="resolution" value="3.20 A"/>
    <property type="chains" value="L5/l5=2-297"/>
</dbReference>
<dbReference type="PDB" id="4U52">
    <property type="method" value="X-ray"/>
    <property type="resolution" value="3.00 A"/>
    <property type="chains" value="L5/l5=2-297"/>
</dbReference>
<dbReference type="PDB" id="4U53">
    <property type="method" value="X-ray"/>
    <property type="resolution" value="3.30 A"/>
    <property type="chains" value="L5/l5=2-297"/>
</dbReference>
<dbReference type="PDB" id="4U55">
    <property type="method" value="X-ray"/>
    <property type="resolution" value="3.20 A"/>
    <property type="chains" value="L5/l5=2-297"/>
</dbReference>
<dbReference type="PDB" id="4U56">
    <property type="method" value="X-ray"/>
    <property type="resolution" value="3.45 A"/>
    <property type="chains" value="L5/l5=2-297"/>
</dbReference>
<dbReference type="PDB" id="4U6F">
    <property type="method" value="X-ray"/>
    <property type="resolution" value="3.10 A"/>
    <property type="chains" value="L5/l5=2-297"/>
</dbReference>
<dbReference type="PDB" id="4V4B">
    <property type="method" value="EM"/>
    <property type="resolution" value="11.70 A"/>
    <property type="chains" value="BE=11-232"/>
</dbReference>
<dbReference type="PDB" id="4V5Z">
    <property type="method" value="EM"/>
    <property type="resolution" value="8.70 A"/>
    <property type="chains" value="Bn=1-297"/>
</dbReference>
<dbReference type="PDB" id="4V6I">
    <property type="method" value="EM"/>
    <property type="resolution" value="8.80 A"/>
    <property type="chains" value="BQ=1-297"/>
</dbReference>
<dbReference type="PDB" id="4V7F">
    <property type="method" value="EM"/>
    <property type="resolution" value="8.70 A"/>
    <property type="chains" value="P=1-297"/>
</dbReference>
<dbReference type="PDB" id="4V7R">
    <property type="method" value="X-ray"/>
    <property type="resolution" value="4.00 A"/>
    <property type="chains" value="BE/DE=1-297"/>
</dbReference>
<dbReference type="PDB" id="4V88">
    <property type="method" value="X-ray"/>
    <property type="resolution" value="3.00 A"/>
    <property type="chains" value="BD/DD=1-297"/>
</dbReference>
<dbReference type="PDB" id="4V8T">
    <property type="method" value="EM"/>
    <property type="resolution" value="8.10 A"/>
    <property type="chains" value="D=1-297"/>
</dbReference>
<dbReference type="PDB" id="4V8Y">
    <property type="method" value="EM"/>
    <property type="resolution" value="4.30 A"/>
    <property type="chains" value="BD=2-297"/>
</dbReference>
<dbReference type="PDB" id="4V8Z">
    <property type="method" value="EM"/>
    <property type="resolution" value="6.60 A"/>
    <property type="chains" value="BD=2-297"/>
</dbReference>
<dbReference type="PDB" id="4V91">
    <property type="method" value="EM"/>
    <property type="resolution" value="3.70 A"/>
    <property type="chains" value="D=1-297"/>
</dbReference>
<dbReference type="PDB" id="5APN">
    <property type="method" value="EM"/>
    <property type="resolution" value="3.91 A"/>
    <property type="chains" value="D=1-297"/>
</dbReference>
<dbReference type="PDB" id="5APO">
    <property type="method" value="EM"/>
    <property type="resolution" value="3.41 A"/>
    <property type="chains" value="D=1-297"/>
</dbReference>
<dbReference type="PDB" id="5DAT">
    <property type="method" value="X-ray"/>
    <property type="resolution" value="3.15 A"/>
    <property type="chains" value="L5/l5=2-297"/>
</dbReference>
<dbReference type="PDB" id="5DC3">
    <property type="method" value="X-ray"/>
    <property type="resolution" value="3.25 A"/>
    <property type="chains" value="L5/l5=2-297"/>
</dbReference>
<dbReference type="PDB" id="5DGE">
    <property type="method" value="X-ray"/>
    <property type="resolution" value="3.45 A"/>
    <property type="chains" value="L5/l5=2-297"/>
</dbReference>
<dbReference type="PDB" id="5DGF">
    <property type="method" value="X-ray"/>
    <property type="resolution" value="3.30 A"/>
    <property type="chains" value="L5/l5=2-297"/>
</dbReference>
<dbReference type="PDB" id="5DGV">
    <property type="method" value="X-ray"/>
    <property type="resolution" value="3.10 A"/>
    <property type="chains" value="L5/l5=2-297"/>
</dbReference>
<dbReference type="PDB" id="5FCI">
    <property type="method" value="X-ray"/>
    <property type="resolution" value="3.40 A"/>
    <property type="chains" value="L5/l5=2-297"/>
</dbReference>
<dbReference type="PDB" id="5FCJ">
    <property type="method" value="X-ray"/>
    <property type="resolution" value="3.10 A"/>
    <property type="chains" value="L5/l5=2-297"/>
</dbReference>
<dbReference type="PDB" id="5GAK">
    <property type="method" value="EM"/>
    <property type="resolution" value="3.88 A"/>
    <property type="chains" value="H=1-297"/>
</dbReference>
<dbReference type="PDB" id="5H4P">
    <property type="method" value="EM"/>
    <property type="resolution" value="3.07 A"/>
    <property type="chains" value="D=1-297"/>
</dbReference>
<dbReference type="PDB" id="5I4L">
    <property type="method" value="X-ray"/>
    <property type="resolution" value="3.10 A"/>
    <property type="chains" value="L5/l5=2-297"/>
</dbReference>
<dbReference type="PDB" id="5JCS">
    <property type="method" value="EM"/>
    <property type="resolution" value="9.50 A"/>
    <property type="chains" value="D=1-297"/>
</dbReference>
<dbReference type="PDB" id="5JUO">
    <property type="method" value="EM"/>
    <property type="resolution" value="4.00 A"/>
    <property type="chains" value="I=1-297"/>
</dbReference>
<dbReference type="PDB" id="5JUP">
    <property type="method" value="EM"/>
    <property type="resolution" value="3.50 A"/>
    <property type="chains" value="I=1-297"/>
</dbReference>
<dbReference type="PDB" id="5JUS">
    <property type="method" value="EM"/>
    <property type="resolution" value="4.20 A"/>
    <property type="chains" value="I=1-297"/>
</dbReference>
<dbReference type="PDB" id="5JUT">
    <property type="method" value="EM"/>
    <property type="resolution" value="4.00 A"/>
    <property type="chains" value="I=1-297"/>
</dbReference>
<dbReference type="PDB" id="5JUU">
    <property type="method" value="EM"/>
    <property type="resolution" value="4.00 A"/>
    <property type="chains" value="I=1-297"/>
</dbReference>
<dbReference type="PDB" id="5LYB">
    <property type="method" value="X-ray"/>
    <property type="resolution" value="3.25 A"/>
    <property type="chains" value="L5/l5=2-297"/>
</dbReference>
<dbReference type="PDB" id="5M1J">
    <property type="method" value="EM"/>
    <property type="resolution" value="3.30 A"/>
    <property type="chains" value="D5=2-297"/>
</dbReference>
<dbReference type="PDB" id="5MC6">
    <property type="method" value="EM"/>
    <property type="resolution" value="3.80 A"/>
    <property type="chains" value="BI=1-297"/>
</dbReference>
<dbReference type="PDB" id="5MEI">
    <property type="method" value="X-ray"/>
    <property type="resolution" value="3.50 A"/>
    <property type="chains" value="CG/m=2-297"/>
</dbReference>
<dbReference type="PDB" id="5NDG">
    <property type="method" value="X-ray"/>
    <property type="resolution" value="3.70 A"/>
    <property type="chains" value="L5/l5=2-297"/>
</dbReference>
<dbReference type="PDB" id="5NDV">
    <property type="method" value="X-ray"/>
    <property type="resolution" value="3.30 A"/>
    <property type="chains" value="L5/l5=2-297"/>
</dbReference>
<dbReference type="PDB" id="5NDW">
    <property type="method" value="X-ray"/>
    <property type="resolution" value="3.70 A"/>
    <property type="chains" value="L5/l5=2-297"/>
</dbReference>
<dbReference type="PDB" id="5OBM">
    <property type="method" value="X-ray"/>
    <property type="resolution" value="3.40 A"/>
    <property type="chains" value="L5/l5=2-297"/>
</dbReference>
<dbReference type="PDB" id="5ON6">
    <property type="method" value="X-ray"/>
    <property type="resolution" value="3.10 A"/>
    <property type="chains" value="CG/m=2-297"/>
</dbReference>
<dbReference type="PDB" id="5T62">
    <property type="method" value="EM"/>
    <property type="resolution" value="3.30 A"/>
    <property type="chains" value="G=1-297"/>
</dbReference>
<dbReference type="PDB" id="5T6R">
    <property type="method" value="EM"/>
    <property type="resolution" value="4.50 A"/>
    <property type="chains" value="G=1-297"/>
</dbReference>
<dbReference type="PDB" id="5TBW">
    <property type="method" value="X-ray"/>
    <property type="resolution" value="3.00 A"/>
    <property type="chains" value="CG/m=2-297"/>
</dbReference>
<dbReference type="PDB" id="5TGA">
    <property type="method" value="X-ray"/>
    <property type="resolution" value="3.30 A"/>
    <property type="chains" value="L5/l5=2-297"/>
</dbReference>
<dbReference type="PDB" id="5TGM">
    <property type="method" value="X-ray"/>
    <property type="resolution" value="3.50 A"/>
    <property type="chains" value="L5/l5=2-297"/>
</dbReference>
<dbReference type="PDB" id="6FT6">
    <property type="method" value="EM"/>
    <property type="resolution" value="3.90 A"/>
    <property type="chains" value="D=1-297"/>
</dbReference>
<dbReference type="PDB" id="6GQ1">
    <property type="method" value="EM"/>
    <property type="resolution" value="4.40 A"/>
    <property type="chains" value="D=2-297"/>
</dbReference>
<dbReference type="PDB" id="6GQB">
    <property type="method" value="EM"/>
    <property type="resolution" value="3.90 A"/>
    <property type="chains" value="D=2-297"/>
</dbReference>
<dbReference type="PDB" id="6GQV">
    <property type="method" value="EM"/>
    <property type="resolution" value="4.00 A"/>
    <property type="chains" value="D=2-297"/>
</dbReference>
<dbReference type="PDB" id="6HD7">
    <property type="method" value="EM"/>
    <property type="resolution" value="3.40 A"/>
    <property type="chains" value="H=1-297"/>
</dbReference>
<dbReference type="PDB" id="6HHQ">
    <property type="method" value="X-ray"/>
    <property type="resolution" value="3.10 A"/>
    <property type="chains" value="CG/m=1-297"/>
</dbReference>
<dbReference type="PDB" id="6I7O">
    <property type="method" value="EM"/>
    <property type="resolution" value="5.30 A"/>
    <property type="chains" value="BI/YI=4-297"/>
</dbReference>
<dbReference type="PDB" id="6M62">
    <property type="method" value="EM"/>
    <property type="resolution" value="3.20 A"/>
    <property type="chains" value="D=1-297"/>
</dbReference>
<dbReference type="PDB" id="6N8J">
    <property type="method" value="EM"/>
    <property type="resolution" value="3.50 A"/>
    <property type="chains" value="D=1-297"/>
</dbReference>
<dbReference type="PDB" id="6N8K">
    <property type="method" value="EM"/>
    <property type="resolution" value="3.60 A"/>
    <property type="chains" value="D=1-297"/>
</dbReference>
<dbReference type="PDB" id="6N8L">
    <property type="method" value="EM"/>
    <property type="resolution" value="3.60 A"/>
    <property type="chains" value="D=1-297"/>
</dbReference>
<dbReference type="PDB" id="6N8M">
    <property type="method" value="EM"/>
    <property type="resolution" value="3.50 A"/>
    <property type="chains" value="G=1-297"/>
</dbReference>
<dbReference type="PDB" id="6N8N">
    <property type="method" value="EM"/>
    <property type="resolution" value="3.80 A"/>
    <property type="chains" value="G=1-297"/>
</dbReference>
<dbReference type="PDB" id="6N8O">
    <property type="method" value="EM"/>
    <property type="resolution" value="3.50 A"/>
    <property type="chains" value="G=1-297"/>
</dbReference>
<dbReference type="PDB" id="6OIG">
    <property type="method" value="EM"/>
    <property type="resolution" value="3.80 A"/>
    <property type="chains" value="D=2-297"/>
</dbReference>
<dbReference type="PDB" id="6Q8Y">
    <property type="method" value="EM"/>
    <property type="resolution" value="3.10 A"/>
    <property type="chains" value="BI=2-297"/>
</dbReference>
<dbReference type="PDB" id="6QIK">
    <property type="method" value="EM"/>
    <property type="resolution" value="3.10 A"/>
    <property type="chains" value="P=1-297"/>
</dbReference>
<dbReference type="PDB" id="6QT0">
    <property type="method" value="EM"/>
    <property type="resolution" value="3.40 A"/>
    <property type="chains" value="P=1-297"/>
</dbReference>
<dbReference type="PDB" id="6QTZ">
    <property type="method" value="EM"/>
    <property type="resolution" value="3.50 A"/>
    <property type="chains" value="P=1-297"/>
</dbReference>
<dbReference type="PDB" id="6R84">
    <property type="method" value="EM"/>
    <property type="resolution" value="3.60 A"/>
    <property type="chains" value="H=2-297"/>
</dbReference>
<dbReference type="PDB" id="6R86">
    <property type="method" value="EM"/>
    <property type="resolution" value="3.40 A"/>
    <property type="chains" value="H=2-297"/>
</dbReference>
<dbReference type="PDB" id="6R87">
    <property type="method" value="EM"/>
    <property type="resolution" value="3.40 A"/>
    <property type="chains" value="H=2-297"/>
</dbReference>
<dbReference type="PDB" id="6RI5">
    <property type="method" value="EM"/>
    <property type="resolution" value="3.30 A"/>
    <property type="chains" value="P=1-297"/>
</dbReference>
<dbReference type="PDB" id="6RZZ">
    <property type="method" value="EM"/>
    <property type="resolution" value="3.20 A"/>
    <property type="chains" value="P=1-297"/>
</dbReference>
<dbReference type="PDB" id="6S05">
    <property type="method" value="EM"/>
    <property type="resolution" value="3.90 A"/>
    <property type="chains" value="P=1-297"/>
</dbReference>
<dbReference type="PDB" id="6S47">
    <property type="method" value="EM"/>
    <property type="resolution" value="3.28 A"/>
    <property type="chains" value="AG=2-297"/>
</dbReference>
<dbReference type="PDB" id="6SNT">
    <property type="method" value="EM"/>
    <property type="resolution" value="2.80 A"/>
    <property type="chains" value="k=1-297"/>
</dbReference>
<dbReference type="PDB" id="6SV4">
    <property type="method" value="EM"/>
    <property type="resolution" value="3.30 A"/>
    <property type="chains" value="BI/YI/ZI=1-297"/>
</dbReference>
<dbReference type="PDB" id="6T4Q">
    <property type="method" value="EM"/>
    <property type="resolution" value="2.60 A"/>
    <property type="chains" value="LD=4-297"/>
</dbReference>
<dbReference type="PDB" id="6T7I">
    <property type="method" value="EM"/>
    <property type="resolution" value="3.20 A"/>
    <property type="chains" value="LD=1-297"/>
</dbReference>
<dbReference type="PDB" id="6T7T">
    <property type="method" value="EM"/>
    <property type="resolution" value="3.10 A"/>
    <property type="chains" value="LD=1-297"/>
</dbReference>
<dbReference type="PDB" id="6T83">
    <property type="method" value="EM"/>
    <property type="resolution" value="4.00 A"/>
    <property type="chains" value="Dy/Ga=1-297"/>
</dbReference>
<dbReference type="PDB" id="6TB3">
    <property type="method" value="EM"/>
    <property type="resolution" value="2.80 A"/>
    <property type="chains" value="BI=4-297"/>
</dbReference>
<dbReference type="PDB" id="6TNU">
    <property type="method" value="EM"/>
    <property type="resolution" value="3.10 A"/>
    <property type="chains" value="BI=4-297"/>
</dbReference>
<dbReference type="PDB" id="6WOO">
    <property type="method" value="EM"/>
    <property type="resolution" value="2.90 A"/>
    <property type="chains" value="D=3-297"/>
</dbReference>
<dbReference type="PDB" id="6YLG">
    <property type="method" value="EM"/>
    <property type="resolution" value="3.00 A"/>
    <property type="chains" value="D=1-297"/>
</dbReference>
<dbReference type="PDB" id="6YLH">
    <property type="method" value="EM"/>
    <property type="resolution" value="3.10 A"/>
    <property type="chains" value="D=1-297"/>
</dbReference>
<dbReference type="PDB" id="6Z6J">
    <property type="method" value="EM"/>
    <property type="resolution" value="3.40 A"/>
    <property type="chains" value="LD=1-297"/>
</dbReference>
<dbReference type="PDB" id="6Z6K">
    <property type="method" value="EM"/>
    <property type="resolution" value="3.40 A"/>
    <property type="chains" value="LD=1-297"/>
</dbReference>
<dbReference type="PDB" id="7AZY">
    <property type="method" value="EM"/>
    <property type="resolution" value="2.88 A"/>
    <property type="chains" value="t=1-297"/>
</dbReference>
<dbReference type="PDB" id="7B7D">
    <property type="method" value="EM"/>
    <property type="resolution" value="3.30 A"/>
    <property type="chains" value="LG=4-297"/>
</dbReference>
<dbReference type="PDB" id="7BT6">
    <property type="method" value="EM"/>
    <property type="resolution" value="3.12 A"/>
    <property type="chains" value="D=1-297"/>
</dbReference>
<dbReference type="PDB" id="7BTB">
    <property type="method" value="EM"/>
    <property type="resolution" value="3.22 A"/>
    <property type="chains" value="D=1-297"/>
</dbReference>
<dbReference type="PDB" id="7MPI">
    <property type="method" value="EM"/>
    <property type="resolution" value="3.05 A"/>
    <property type="chains" value="AD=6-297"/>
</dbReference>
<dbReference type="PDB" id="7MPJ">
    <property type="method" value="EM"/>
    <property type="resolution" value="2.70 A"/>
    <property type="chains" value="AD=6-297"/>
</dbReference>
<dbReference type="PDB" id="7N8B">
    <property type="method" value="EM"/>
    <property type="resolution" value="3.05 A"/>
    <property type="chains" value="AD=6-297"/>
</dbReference>
<dbReference type="PDB" id="7NRC">
    <property type="method" value="EM"/>
    <property type="resolution" value="3.90 A"/>
    <property type="chains" value="LG=4-297"/>
</dbReference>
<dbReference type="PDB" id="7NRD">
    <property type="method" value="EM"/>
    <property type="resolution" value="4.36 A"/>
    <property type="chains" value="LG=4-297"/>
</dbReference>
<dbReference type="PDB" id="7OH3">
    <property type="method" value="EM"/>
    <property type="resolution" value="3.40 A"/>
    <property type="chains" value="D=1-297"/>
</dbReference>
<dbReference type="PDB" id="7OHQ">
    <property type="method" value="EM"/>
    <property type="resolution" value="3.10 A"/>
    <property type="chains" value="D=1-297"/>
</dbReference>
<dbReference type="PDB" id="7OHT">
    <property type="method" value="EM"/>
    <property type="resolution" value="4.70 A"/>
    <property type="chains" value="D=1-297"/>
</dbReference>
<dbReference type="PDB" id="7UG6">
    <property type="method" value="EM"/>
    <property type="resolution" value="2.90 A"/>
    <property type="chains" value="D=1-297"/>
</dbReference>
<dbReference type="PDB" id="7UOO">
    <property type="method" value="EM"/>
    <property type="resolution" value="2.34 A"/>
    <property type="chains" value="D=1-297"/>
</dbReference>
<dbReference type="PDB" id="7UQB">
    <property type="method" value="EM"/>
    <property type="resolution" value="2.43 A"/>
    <property type="chains" value="D=1-297"/>
</dbReference>
<dbReference type="PDB" id="7UQZ">
    <property type="method" value="EM"/>
    <property type="resolution" value="2.44 A"/>
    <property type="chains" value="D=1-297"/>
</dbReference>
<dbReference type="PDB" id="7V08">
    <property type="method" value="EM"/>
    <property type="resolution" value="2.36 A"/>
    <property type="chains" value="D=1-297"/>
</dbReference>
<dbReference type="PDB" id="7Z34">
    <property type="method" value="EM"/>
    <property type="resolution" value="3.80 A"/>
    <property type="chains" value="D=1-297"/>
</dbReference>
<dbReference type="PDB" id="7ZPQ">
    <property type="method" value="EM"/>
    <property type="resolution" value="3.47 A"/>
    <property type="chains" value="BD=4-297"/>
</dbReference>
<dbReference type="PDB" id="7ZRS">
    <property type="method" value="EM"/>
    <property type="resolution" value="4.80 A"/>
    <property type="chains" value="BD=4-297"/>
</dbReference>
<dbReference type="PDB" id="7ZS5">
    <property type="method" value="EM"/>
    <property type="resolution" value="3.20 A"/>
    <property type="chains" value="BF=2-297"/>
</dbReference>
<dbReference type="PDB" id="7ZUW">
    <property type="method" value="EM"/>
    <property type="resolution" value="4.30 A"/>
    <property type="chains" value="BD=4-297"/>
</dbReference>
<dbReference type="PDB" id="7ZUX">
    <property type="method" value="EM"/>
    <property type="resolution" value="2.50 A"/>
    <property type="chains" value="ED=4-297"/>
</dbReference>
<dbReference type="PDB" id="7ZW0">
    <property type="method" value="EM"/>
    <property type="resolution" value="2.40 A"/>
    <property type="chains" value="LH=1-297"/>
</dbReference>
<dbReference type="PDB" id="8AAF">
    <property type="method" value="EM"/>
    <property type="resolution" value="2.50 A"/>
    <property type="chains" value="m=1-297"/>
</dbReference>
<dbReference type="PDB" id="8AGT">
    <property type="method" value="EM"/>
    <property type="resolution" value="2.60 A"/>
    <property type="chains" value="m=1-297"/>
</dbReference>
<dbReference type="PDB" id="8AGU">
    <property type="method" value="EM"/>
    <property type="resolution" value="2.70 A"/>
    <property type="chains" value="m=1-297"/>
</dbReference>
<dbReference type="PDB" id="8AGV">
    <property type="method" value="EM"/>
    <property type="resolution" value="2.60 A"/>
    <property type="chains" value="m=1-297"/>
</dbReference>
<dbReference type="PDB" id="8AGW">
    <property type="method" value="EM"/>
    <property type="resolution" value="2.60 A"/>
    <property type="chains" value="m=1-297"/>
</dbReference>
<dbReference type="PDB" id="8AGX">
    <property type="method" value="EM"/>
    <property type="resolution" value="2.40 A"/>
    <property type="chains" value="m=1-297"/>
</dbReference>
<dbReference type="PDB" id="8AGZ">
    <property type="method" value="EM"/>
    <property type="resolution" value="2.60 A"/>
    <property type="chains" value="m=1-297"/>
</dbReference>
<dbReference type="PDB" id="8BIP">
    <property type="method" value="EM"/>
    <property type="resolution" value="3.10 A"/>
    <property type="chains" value="LD=4-297"/>
</dbReference>
<dbReference type="PDB" id="8BJQ">
    <property type="method" value="EM"/>
    <property type="resolution" value="3.80 A"/>
    <property type="chains" value="LD=4-297"/>
</dbReference>
<dbReference type="PDB" id="8BN3">
    <property type="method" value="EM"/>
    <property type="resolution" value="2.40 A"/>
    <property type="chains" value="L5=2-296"/>
</dbReference>
<dbReference type="PDB" id="8BQD">
    <property type="method" value="EM"/>
    <property type="resolution" value="3.90 A"/>
    <property type="chains" value="BI=4-297"/>
</dbReference>
<dbReference type="PDB" id="8BQX">
    <property type="method" value="EM"/>
    <property type="resolution" value="3.80 A"/>
    <property type="chains" value="BI=4-297"/>
</dbReference>
<dbReference type="PDB" id="8CCS">
    <property type="method" value="EM"/>
    <property type="resolution" value="1.97 A"/>
    <property type="chains" value="HH=1-297"/>
</dbReference>
<dbReference type="PDB" id="8CDL">
    <property type="method" value="EM"/>
    <property type="resolution" value="2.72 A"/>
    <property type="chains" value="HH=1-297"/>
</dbReference>
<dbReference type="PDB" id="8CDR">
    <property type="method" value="EM"/>
    <property type="resolution" value="2.04 A"/>
    <property type="chains" value="HH=1-297"/>
</dbReference>
<dbReference type="PDB" id="8CEH">
    <property type="method" value="EM"/>
    <property type="resolution" value="2.05 A"/>
    <property type="chains" value="HH=1-297"/>
</dbReference>
<dbReference type="PDB" id="8CF5">
    <property type="method" value="EM"/>
    <property type="resolution" value="2.71 A"/>
    <property type="chains" value="HH=1-297"/>
</dbReference>
<dbReference type="PDB" id="8CG8">
    <property type="method" value="EM"/>
    <property type="resolution" value="2.57 A"/>
    <property type="chains" value="HH=1-297"/>
</dbReference>
<dbReference type="PDB" id="8CGN">
    <property type="method" value="EM"/>
    <property type="resolution" value="2.28 A"/>
    <property type="chains" value="HH=1-297"/>
</dbReference>
<dbReference type="PDB" id="8CIV">
    <property type="method" value="EM"/>
    <property type="resolution" value="2.47 A"/>
    <property type="chains" value="HH=1-297"/>
</dbReference>
<dbReference type="PDB" id="8CKU">
    <property type="method" value="EM"/>
    <property type="resolution" value="3.11 A"/>
    <property type="chains" value="HH=1-297"/>
</dbReference>
<dbReference type="PDB" id="8CMJ">
    <property type="method" value="EM"/>
    <property type="resolution" value="3.79 A"/>
    <property type="chains" value="HH=1-297"/>
</dbReference>
<dbReference type="PDB" id="8HFR">
    <property type="method" value="EM"/>
    <property type="resolution" value="2.64 A"/>
    <property type="chains" value="Ez=1-297"/>
</dbReference>
<dbReference type="PDB" id="8K2D">
    <property type="method" value="EM"/>
    <property type="resolution" value="3.20 A"/>
    <property type="chains" value="LD=1-297"/>
</dbReference>
<dbReference type="PDB" id="8K82">
    <property type="method" value="EM"/>
    <property type="resolution" value="3.00 A"/>
    <property type="chains" value="LD=1-297"/>
</dbReference>
<dbReference type="PDB" id="8P4V">
    <property type="method" value="X-ray"/>
    <property type="resolution" value="3.16 A"/>
    <property type="chains" value="CG/m=1-297"/>
</dbReference>
<dbReference type="PDB" id="8P8M">
    <property type="method" value="EM"/>
    <property type="resolution" value="2.66 A"/>
    <property type="chains" value="LI=1-297"/>
</dbReference>
<dbReference type="PDB" id="8P8N">
    <property type="method" value="EM"/>
    <property type="resolution" value="2.15 A"/>
    <property type="chains" value="LI=1-297"/>
</dbReference>
<dbReference type="PDB" id="8P8U">
    <property type="method" value="EM"/>
    <property type="resolution" value="2.23 A"/>
    <property type="chains" value="LI=1-297"/>
</dbReference>
<dbReference type="PDB" id="8P9A">
    <property type="method" value="X-ray"/>
    <property type="resolution" value="2.90 A"/>
    <property type="chains" value="CG/m=1-297"/>
</dbReference>
<dbReference type="PDB" id="8PFR">
    <property type="method" value="EM"/>
    <property type="resolution" value="2.15 A"/>
    <property type="chains" value="LI=1-297"/>
</dbReference>
<dbReference type="PDB" id="8T2X">
    <property type="method" value="EM"/>
    <property type="resolution" value="2.46 A"/>
    <property type="chains" value="AD=1-297"/>
</dbReference>
<dbReference type="PDB" id="8T2Y">
    <property type="method" value="EM"/>
    <property type="resolution" value="2.20 A"/>
    <property type="chains" value="AD=1-297"/>
</dbReference>
<dbReference type="PDB" id="8T2Z">
    <property type="method" value="EM"/>
    <property type="resolution" value="2.40 A"/>
    <property type="chains" value="AD=1-297"/>
</dbReference>
<dbReference type="PDB" id="8T30">
    <property type="method" value="EM"/>
    <property type="resolution" value="2.88 A"/>
    <property type="chains" value="AD=1-297"/>
</dbReference>
<dbReference type="PDB" id="8T3A">
    <property type="method" value="EM"/>
    <property type="resolution" value="2.86 A"/>
    <property type="chains" value="AD=1-297"/>
</dbReference>
<dbReference type="PDB" id="8T3B">
    <property type="method" value="EM"/>
    <property type="resolution" value="3.08 A"/>
    <property type="chains" value="AD=1-297"/>
</dbReference>
<dbReference type="PDB" id="8T3C">
    <property type="method" value="EM"/>
    <property type="resolution" value="3.86 A"/>
    <property type="chains" value="AD=1-297"/>
</dbReference>
<dbReference type="PDB" id="8T3D">
    <property type="method" value="EM"/>
    <property type="resolution" value="2.95 A"/>
    <property type="chains" value="AD=1-297"/>
</dbReference>
<dbReference type="PDB" id="8T3E">
    <property type="method" value="EM"/>
    <property type="resolution" value="3.04 A"/>
    <property type="chains" value="AD=1-297"/>
</dbReference>
<dbReference type="PDB" id="8T3F">
    <property type="method" value="EM"/>
    <property type="resolution" value="3.09 A"/>
    <property type="chains" value="AD=1-297"/>
</dbReference>
<dbReference type="PDB" id="8UT0">
    <property type="method" value="EM"/>
    <property type="resolution" value="3.22 A"/>
    <property type="chains" value="LG=4-297"/>
</dbReference>
<dbReference type="PDB" id="8UTI">
    <property type="method" value="EM"/>
    <property type="resolution" value="3.13 A"/>
    <property type="chains" value="LG=4-297"/>
</dbReference>
<dbReference type="PDB" id="8XU8">
    <property type="method" value="EM"/>
    <property type="resolution" value="3.40 A"/>
    <property type="chains" value="G=4-297"/>
</dbReference>
<dbReference type="PDB" id="8Y0U">
    <property type="method" value="EM"/>
    <property type="resolution" value="3.59 A"/>
    <property type="chains" value="LD=1-297"/>
</dbReference>
<dbReference type="PDB" id="8YLD">
    <property type="method" value="EM"/>
    <property type="resolution" value="3.90 A"/>
    <property type="chains" value="G=4-297"/>
</dbReference>
<dbReference type="PDB" id="8YLR">
    <property type="method" value="EM"/>
    <property type="resolution" value="3.90 A"/>
    <property type="chains" value="G=4-297"/>
</dbReference>
<dbReference type="PDB" id="8Z70">
    <property type="method" value="EM"/>
    <property type="resolution" value="3.20 A"/>
    <property type="chains" value="G=4-297"/>
</dbReference>
<dbReference type="PDB" id="8Z71">
    <property type="method" value="EM"/>
    <property type="resolution" value="3.60 A"/>
    <property type="chains" value="G=4-297"/>
</dbReference>
<dbReference type="PDB" id="9F9S">
    <property type="method" value="EM"/>
    <property type="resolution" value="2.90 A"/>
    <property type="chains" value="Lz/Mz=1-297"/>
</dbReference>
<dbReference type="PDBsum" id="3J6X"/>
<dbReference type="PDBsum" id="3J6Y"/>
<dbReference type="PDBsum" id="3J77"/>
<dbReference type="PDBsum" id="3J78"/>
<dbReference type="PDBsum" id="3JCT"/>
<dbReference type="PDBsum" id="4U3M"/>
<dbReference type="PDBsum" id="4U3N"/>
<dbReference type="PDBsum" id="4U3U"/>
<dbReference type="PDBsum" id="4U4N"/>
<dbReference type="PDBsum" id="4U4O"/>
<dbReference type="PDBsum" id="4U4Q"/>
<dbReference type="PDBsum" id="4U4R"/>
<dbReference type="PDBsum" id="4U4U"/>
<dbReference type="PDBsum" id="4U4Y"/>
<dbReference type="PDBsum" id="4U4Z"/>
<dbReference type="PDBsum" id="4U50"/>
<dbReference type="PDBsum" id="4U51"/>
<dbReference type="PDBsum" id="4U52"/>
<dbReference type="PDBsum" id="4U53"/>
<dbReference type="PDBsum" id="4U55"/>
<dbReference type="PDBsum" id="4U56"/>
<dbReference type="PDBsum" id="4U6F"/>
<dbReference type="PDBsum" id="4V4B"/>
<dbReference type="PDBsum" id="4V5Z"/>
<dbReference type="PDBsum" id="4V6I"/>
<dbReference type="PDBsum" id="4V7F"/>
<dbReference type="PDBsum" id="4V7R"/>
<dbReference type="PDBsum" id="4V88"/>
<dbReference type="PDBsum" id="4V8T"/>
<dbReference type="PDBsum" id="4V8Y"/>
<dbReference type="PDBsum" id="4V8Z"/>
<dbReference type="PDBsum" id="4V91"/>
<dbReference type="PDBsum" id="5APN"/>
<dbReference type="PDBsum" id="5APO"/>
<dbReference type="PDBsum" id="5DAT"/>
<dbReference type="PDBsum" id="5DC3"/>
<dbReference type="PDBsum" id="5DGE"/>
<dbReference type="PDBsum" id="5DGF"/>
<dbReference type="PDBsum" id="5DGV"/>
<dbReference type="PDBsum" id="5FCI"/>
<dbReference type="PDBsum" id="5FCJ"/>
<dbReference type="PDBsum" id="5GAK"/>
<dbReference type="PDBsum" id="5H4P"/>
<dbReference type="PDBsum" id="5I4L"/>
<dbReference type="PDBsum" id="5JCS"/>
<dbReference type="PDBsum" id="5JUO"/>
<dbReference type="PDBsum" id="5JUP"/>
<dbReference type="PDBsum" id="5JUS"/>
<dbReference type="PDBsum" id="5JUT"/>
<dbReference type="PDBsum" id="5JUU"/>
<dbReference type="PDBsum" id="5LYB"/>
<dbReference type="PDBsum" id="5M1J"/>
<dbReference type="PDBsum" id="5MC6"/>
<dbReference type="PDBsum" id="5MEI"/>
<dbReference type="PDBsum" id="5NDG"/>
<dbReference type="PDBsum" id="5NDV"/>
<dbReference type="PDBsum" id="5NDW"/>
<dbReference type="PDBsum" id="5OBM"/>
<dbReference type="PDBsum" id="5ON6"/>
<dbReference type="PDBsum" id="5T62"/>
<dbReference type="PDBsum" id="5T6R"/>
<dbReference type="PDBsum" id="5TBW"/>
<dbReference type="PDBsum" id="5TGA"/>
<dbReference type="PDBsum" id="5TGM"/>
<dbReference type="PDBsum" id="6FT6"/>
<dbReference type="PDBsum" id="6GQ1"/>
<dbReference type="PDBsum" id="6GQB"/>
<dbReference type="PDBsum" id="6GQV"/>
<dbReference type="PDBsum" id="6HD7"/>
<dbReference type="PDBsum" id="6HHQ"/>
<dbReference type="PDBsum" id="6I7O"/>
<dbReference type="PDBsum" id="6M62"/>
<dbReference type="PDBsum" id="6N8J"/>
<dbReference type="PDBsum" id="6N8K"/>
<dbReference type="PDBsum" id="6N8L"/>
<dbReference type="PDBsum" id="6N8M"/>
<dbReference type="PDBsum" id="6N8N"/>
<dbReference type="PDBsum" id="6N8O"/>
<dbReference type="PDBsum" id="6OIG"/>
<dbReference type="PDBsum" id="6Q8Y"/>
<dbReference type="PDBsum" id="6QIK"/>
<dbReference type="PDBsum" id="6QT0"/>
<dbReference type="PDBsum" id="6QTZ"/>
<dbReference type="PDBsum" id="6R84"/>
<dbReference type="PDBsum" id="6R86"/>
<dbReference type="PDBsum" id="6R87"/>
<dbReference type="PDBsum" id="6RI5"/>
<dbReference type="PDBsum" id="6RZZ"/>
<dbReference type="PDBsum" id="6S05"/>
<dbReference type="PDBsum" id="6S47"/>
<dbReference type="PDBsum" id="6SNT"/>
<dbReference type="PDBsum" id="6SV4"/>
<dbReference type="PDBsum" id="6T4Q"/>
<dbReference type="PDBsum" id="6T7I"/>
<dbReference type="PDBsum" id="6T7T"/>
<dbReference type="PDBsum" id="6T83"/>
<dbReference type="PDBsum" id="6TB3"/>
<dbReference type="PDBsum" id="6TNU"/>
<dbReference type="PDBsum" id="6WOO"/>
<dbReference type="PDBsum" id="6YLG"/>
<dbReference type="PDBsum" id="6YLH"/>
<dbReference type="PDBsum" id="6Z6J"/>
<dbReference type="PDBsum" id="6Z6K"/>
<dbReference type="PDBsum" id="7AZY"/>
<dbReference type="PDBsum" id="7B7D"/>
<dbReference type="PDBsum" id="7BT6"/>
<dbReference type="PDBsum" id="7BTB"/>
<dbReference type="PDBsum" id="7MPI"/>
<dbReference type="PDBsum" id="7MPJ"/>
<dbReference type="PDBsum" id="7N8B"/>
<dbReference type="PDBsum" id="7NRC"/>
<dbReference type="PDBsum" id="7NRD"/>
<dbReference type="PDBsum" id="7OH3"/>
<dbReference type="PDBsum" id="7OHQ"/>
<dbReference type="PDBsum" id="7OHT"/>
<dbReference type="PDBsum" id="7UG6"/>
<dbReference type="PDBsum" id="7UOO"/>
<dbReference type="PDBsum" id="7UQB"/>
<dbReference type="PDBsum" id="7UQZ"/>
<dbReference type="PDBsum" id="7V08"/>
<dbReference type="PDBsum" id="7Z34"/>
<dbReference type="PDBsum" id="7ZPQ"/>
<dbReference type="PDBsum" id="7ZRS"/>
<dbReference type="PDBsum" id="7ZS5"/>
<dbReference type="PDBsum" id="7ZUW"/>
<dbReference type="PDBsum" id="7ZUX"/>
<dbReference type="PDBsum" id="7ZW0"/>
<dbReference type="PDBsum" id="8AAF"/>
<dbReference type="PDBsum" id="8AGT"/>
<dbReference type="PDBsum" id="8AGU"/>
<dbReference type="PDBsum" id="8AGV"/>
<dbReference type="PDBsum" id="8AGW"/>
<dbReference type="PDBsum" id="8AGX"/>
<dbReference type="PDBsum" id="8AGZ"/>
<dbReference type="PDBsum" id="8BIP"/>
<dbReference type="PDBsum" id="8BJQ"/>
<dbReference type="PDBsum" id="8BN3"/>
<dbReference type="PDBsum" id="8BQD"/>
<dbReference type="PDBsum" id="8BQX"/>
<dbReference type="PDBsum" id="8CCS"/>
<dbReference type="PDBsum" id="8CDL"/>
<dbReference type="PDBsum" id="8CDR"/>
<dbReference type="PDBsum" id="8CEH"/>
<dbReference type="PDBsum" id="8CF5"/>
<dbReference type="PDBsum" id="8CG8"/>
<dbReference type="PDBsum" id="8CGN"/>
<dbReference type="PDBsum" id="8CIV"/>
<dbReference type="PDBsum" id="8CKU"/>
<dbReference type="PDBsum" id="8CMJ"/>
<dbReference type="PDBsum" id="8HFR"/>
<dbReference type="PDBsum" id="8K2D"/>
<dbReference type="PDBsum" id="8K82"/>
<dbReference type="PDBsum" id="8P4V"/>
<dbReference type="PDBsum" id="8P8M"/>
<dbReference type="PDBsum" id="8P8N"/>
<dbReference type="PDBsum" id="8P8U"/>
<dbReference type="PDBsum" id="8P9A"/>
<dbReference type="PDBsum" id="8PFR"/>
<dbReference type="PDBsum" id="8T2X"/>
<dbReference type="PDBsum" id="8T2Y"/>
<dbReference type="PDBsum" id="8T2Z"/>
<dbReference type="PDBsum" id="8T30"/>
<dbReference type="PDBsum" id="8T3A"/>
<dbReference type="PDBsum" id="8T3B"/>
<dbReference type="PDBsum" id="8T3C"/>
<dbReference type="PDBsum" id="8T3D"/>
<dbReference type="PDBsum" id="8T3E"/>
<dbReference type="PDBsum" id="8T3F"/>
<dbReference type="PDBsum" id="8UT0"/>
<dbReference type="PDBsum" id="8UTI"/>
<dbReference type="PDBsum" id="8XU8"/>
<dbReference type="PDBsum" id="8Y0U"/>
<dbReference type="PDBsum" id="8YLD"/>
<dbReference type="PDBsum" id="8YLR"/>
<dbReference type="PDBsum" id="8Z70"/>
<dbReference type="PDBsum" id="8Z71"/>
<dbReference type="PDBsum" id="9F9S"/>
<dbReference type="EMDB" id="EMD-0369"/>
<dbReference type="EMDB" id="EMD-0370"/>
<dbReference type="EMDB" id="EMD-0371"/>
<dbReference type="EMDB" id="EMD-0372"/>
<dbReference type="EMDB" id="EMD-0373"/>
<dbReference type="EMDB" id="EMD-10068"/>
<dbReference type="EMDB" id="EMD-10071"/>
<dbReference type="EMDB" id="EMD-10315"/>
<dbReference type="EMDB" id="EMD-10377"/>
<dbReference type="EMDB" id="EMD-10396"/>
<dbReference type="EMDB" id="EMD-10397"/>
<dbReference type="EMDB" id="EMD-10398"/>
<dbReference type="EMDB" id="EMD-10431"/>
<dbReference type="EMDB" id="EMD-10537"/>
<dbReference type="EMDB" id="EMD-11096"/>
<dbReference type="EMDB" id="EMD-11097"/>
<dbReference type="EMDB" id="EMD-11951"/>
<dbReference type="EMDB" id="EMD-12534"/>
<dbReference type="EMDB" id="EMD-12892"/>
<dbReference type="EMDB" id="EMD-12905"/>
<dbReference type="EMDB" id="EMD-12908"/>
<dbReference type="EMDB" id="EMD-14471"/>
<dbReference type="EMDB" id="EMD-14926"/>
<dbReference type="EMDB" id="EMD-14979"/>
<dbReference type="EMDB" id="EMD-14990"/>
<dbReference type="EMDB" id="EMD-15423"/>
<dbReference type="EMDB" id="EMD-15427"/>
<dbReference type="EMDB" id="EMD-16086"/>
<dbReference type="EMDB" id="EMD-16090"/>
<dbReference type="EMDB" id="EMD-16563"/>
<dbReference type="EMDB" id="EMD-16591"/>
<dbReference type="EMDB" id="EMD-16594"/>
<dbReference type="EMDB" id="EMD-16609"/>
<dbReference type="EMDB" id="EMD-16616"/>
<dbReference type="EMDB" id="EMD-16634"/>
<dbReference type="EMDB" id="EMD-16648"/>
<dbReference type="EMDB" id="EMD-16684"/>
<dbReference type="EMDB" id="EMD-16702"/>
<dbReference type="EMDB" id="EMD-16729"/>
<dbReference type="EMDB" id="EMD-17549"/>
<dbReference type="EMDB" id="EMD-17550"/>
<dbReference type="EMDB" id="EMD-17552"/>
<dbReference type="EMDB" id="EMD-17653"/>
<dbReference type="EMDB" id="EMD-20077"/>
<dbReference type="EMDB" id="EMD-21859"/>
<dbReference type="EMDB" id="EMD-23934"/>
<dbReference type="EMDB" id="EMD-23935"/>
<dbReference type="EMDB" id="EMD-24235"/>
<dbReference type="EMDB" id="EMD-26485"/>
<dbReference type="EMDB" id="EMD-26651"/>
<dbReference type="EMDB" id="EMD-26686"/>
<dbReference type="EMDB" id="EMD-26703"/>
<dbReference type="EMDB" id="EMD-26941"/>
<dbReference type="EMDB" id="EMD-30108"/>
<dbReference type="EMDB" id="EMD-30170"/>
<dbReference type="EMDB" id="EMD-30174"/>
<dbReference type="EMDB" id="EMD-34725"/>
<dbReference type="EMDB" id="EMD-36839"/>
<dbReference type="EMDB" id="EMD-36945"/>
<dbReference type="EMDB" id="EMD-38660"/>
<dbReference type="EMDB" id="EMD-4140"/>
<dbReference type="EMDB" id="EMD-4302"/>
<dbReference type="EMDB" id="EMD-4427"/>
<dbReference type="EMDB" id="EMD-4474"/>
<dbReference type="EMDB" id="EMD-4560"/>
<dbReference type="EMDB" id="EMD-4630"/>
<dbReference type="EMDB" id="EMD-4636"/>
<dbReference type="EMDB" id="EMD-4751"/>
<dbReference type="EMDB" id="EMD-4752"/>
<dbReference type="EMDB" id="EMD-4753"/>
<dbReference type="EMDB" id="EMD-4884"/>
<dbReference type="EMDB" id="EMD-50259"/>
<dbReference type="EMDB" id="EMD-8362"/>
<dbReference type="EMDB" id="EMD-8368"/>
<dbReference type="SMR" id="P26321"/>
<dbReference type="BioGRID" id="36050">
    <property type="interactions" value="370"/>
</dbReference>
<dbReference type="ComplexPortal" id="CPX-1601">
    <property type="entry name" value="60S cytosolic large ribosomal subunit"/>
</dbReference>
<dbReference type="DIP" id="DIP-1790N"/>
<dbReference type="FunCoup" id="P26321">
    <property type="interactions" value="1606"/>
</dbReference>
<dbReference type="IntAct" id="P26321">
    <property type="interactions" value="264"/>
</dbReference>
<dbReference type="MINT" id="P26321"/>
<dbReference type="STRING" id="4932.YPL131W"/>
<dbReference type="CarbonylDB" id="P26321"/>
<dbReference type="iPTMnet" id="P26321"/>
<dbReference type="PaxDb" id="4932-YPL131W"/>
<dbReference type="PeptideAtlas" id="P26321"/>
<dbReference type="EnsemblFungi" id="YPL131W_mRNA">
    <property type="protein sequence ID" value="YPL131W"/>
    <property type="gene ID" value="YPL131W"/>
</dbReference>
<dbReference type="GeneID" id="855972"/>
<dbReference type="KEGG" id="sce:YPL131W"/>
<dbReference type="AGR" id="SGD:S000006052"/>
<dbReference type="SGD" id="S000006052">
    <property type="gene designation" value="RPL5"/>
</dbReference>
<dbReference type="VEuPathDB" id="FungiDB:YPL131W"/>
<dbReference type="eggNOG" id="KOG0875">
    <property type="taxonomic scope" value="Eukaryota"/>
</dbReference>
<dbReference type="GeneTree" id="ENSGT00950000183210"/>
<dbReference type="HOGENOM" id="CLU_056222_1_0_1"/>
<dbReference type="InParanoid" id="P26321"/>
<dbReference type="OMA" id="IYEAQVE"/>
<dbReference type="OrthoDB" id="1618453at2759"/>
<dbReference type="BioCyc" id="YEAST:G3O-34030-MONOMER"/>
<dbReference type="Reactome" id="R-SCE-156827">
    <property type="pathway name" value="L13a-mediated translational silencing of Ceruloplasmin expression"/>
</dbReference>
<dbReference type="Reactome" id="R-SCE-1799339">
    <property type="pathway name" value="SRP-dependent cotranslational protein targeting to membrane"/>
</dbReference>
<dbReference type="Reactome" id="R-SCE-72689">
    <property type="pathway name" value="Formation of a pool of free 40S subunits"/>
</dbReference>
<dbReference type="Reactome" id="R-SCE-72706">
    <property type="pathway name" value="GTP hydrolysis and joining of the 60S ribosomal subunit"/>
</dbReference>
<dbReference type="Reactome" id="R-SCE-975956">
    <property type="pathway name" value="Nonsense Mediated Decay (NMD) independent of the Exon Junction Complex (EJC)"/>
</dbReference>
<dbReference type="Reactome" id="R-SCE-975957">
    <property type="pathway name" value="Nonsense Mediated Decay (NMD) enhanced by the Exon Junction Complex (EJC)"/>
</dbReference>
<dbReference type="BioGRID-ORCS" id="855972">
    <property type="hits" value="10 hits in 10 CRISPR screens"/>
</dbReference>
<dbReference type="ChiTaRS" id="RPL1A">
    <property type="organism name" value="yeast"/>
</dbReference>
<dbReference type="PRO" id="PR:P26321"/>
<dbReference type="Proteomes" id="UP000002311">
    <property type="component" value="Chromosome XVI"/>
</dbReference>
<dbReference type="RNAct" id="P26321">
    <property type="molecule type" value="protein"/>
</dbReference>
<dbReference type="GO" id="GO:0005737">
    <property type="term" value="C:cytoplasm"/>
    <property type="evidence" value="ECO:0000303"/>
    <property type="project" value="ComplexPortal"/>
</dbReference>
<dbReference type="GO" id="GO:0005829">
    <property type="term" value="C:cytosol"/>
    <property type="evidence" value="ECO:0000304"/>
    <property type="project" value="Reactome"/>
</dbReference>
<dbReference type="GO" id="GO:0022625">
    <property type="term" value="C:cytosolic large ribosomal subunit"/>
    <property type="evidence" value="ECO:0000314"/>
    <property type="project" value="SGD"/>
</dbReference>
<dbReference type="GO" id="GO:0005634">
    <property type="term" value="C:nucleus"/>
    <property type="evidence" value="ECO:0007669"/>
    <property type="project" value="UniProtKB-SubCell"/>
</dbReference>
<dbReference type="GO" id="GO:0008097">
    <property type="term" value="F:5S rRNA binding"/>
    <property type="evidence" value="ECO:0000314"/>
    <property type="project" value="SGD"/>
</dbReference>
<dbReference type="GO" id="GO:0003735">
    <property type="term" value="F:structural constituent of ribosome"/>
    <property type="evidence" value="ECO:0000318"/>
    <property type="project" value="GO_Central"/>
</dbReference>
<dbReference type="GO" id="GO:0002181">
    <property type="term" value="P:cytoplasmic translation"/>
    <property type="evidence" value="ECO:0000303"/>
    <property type="project" value="ComplexPortal"/>
</dbReference>
<dbReference type="GO" id="GO:0000027">
    <property type="term" value="P:ribosomal large subunit assembly"/>
    <property type="evidence" value="ECO:0000315"/>
    <property type="project" value="SGD"/>
</dbReference>
<dbReference type="CDD" id="cd00432">
    <property type="entry name" value="Ribosomal_L18_L5e"/>
    <property type="match status" value="1"/>
</dbReference>
<dbReference type="FunFam" id="3.30.420.100:FF:000002">
    <property type="entry name" value="60S ribosomal protein L5"/>
    <property type="match status" value="1"/>
</dbReference>
<dbReference type="Gene3D" id="3.30.420.100">
    <property type="match status" value="1"/>
</dbReference>
<dbReference type="HAMAP" id="MF_01337_A">
    <property type="entry name" value="Ribosomal_uL18_A"/>
    <property type="match status" value="1"/>
</dbReference>
<dbReference type="InterPro" id="IPR005485">
    <property type="entry name" value="Rbsml_uL18_euk"/>
</dbReference>
<dbReference type="InterPro" id="IPR025607">
    <property type="entry name" value="Ribosomal_uL18_C_euk"/>
</dbReference>
<dbReference type="PANTHER" id="PTHR23410:SF12">
    <property type="entry name" value="LARGE RIBOSOMAL SUBUNIT PROTEIN UL18"/>
    <property type="match status" value="1"/>
</dbReference>
<dbReference type="PANTHER" id="PTHR23410">
    <property type="entry name" value="RIBOSOMAL PROTEIN L5-RELATED"/>
    <property type="match status" value="1"/>
</dbReference>
<dbReference type="Pfam" id="PF14204">
    <property type="entry name" value="Ribosomal_L18_c"/>
    <property type="match status" value="1"/>
</dbReference>
<dbReference type="Pfam" id="PF17144">
    <property type="entry name" value="Ribosomal_L5e"/>
    <property type="match status" value="1"/>
</dbReference>
<dbReference type="PRINTS" id="PR00058">
    <property type="entry name" value="RIBOSOMALL5"/>
</dbReference>
<dbReference type="SUPFAM" id="SSF53137">
    <property type="entry name" value="Translational machinery components"/>
    <property type="match status" value="1"/>
</dbReference>
<comment type="function">
    <text evidence="8">Component of the ribosome, a large ribonucleoprotein complex responsible for the synthesis of proteins in the cell. The small ribosomal subunit (SSU) binds messenger RNAs (mRNAs) and translates the encoded message by selecting cognate aminoacyl-transfer RNA (tRNA) molecules. The large subunit (LSU) contains the ribosomal catalytic site termed the peptidyl transferase center (PTC), which catalyzes the formation of peptide bonds, thereby polymerizing the amino acids delivered by tRNAs into a polypeptide chain. The nascent polypeptides leave the ribosome through a tunnel in the LSU and interact with protein factors that function in enzymatic processing, targeting, and the membrane insertion of nascent chains at the exit of the ribosomal tunnel.</text>
</comment>
<comment type="subunit">
    <text evidence="1 2 3 9">Component of the large ribosomal subunit (LSU). Mature yeast ribosomes consist of a small (40S) and a large (60S) subunit. The 40S small subunit contains 1 molecule of ribosomal RNA (18S rRNA) and 33 different proteins (encoded by 57 genes). The large 60S subunit contains 3 rRNA molecules (25S, 5.8S and 5S rRNA) and 46 different proteins (encoded by 81 genes) (PubMed:22096102, PubMed:9559554). Component of a hexameric 5S RNP precursor complex, composed of 5S RNA, RRS1, RPF2, RPL5, RPL11A/RPL11B and SYO1; this complex acts as a precursor for ribosome assembly (PubMed:37291423). RPL5/uL18 forms a heterotrimeric complex with SYO1 and RPL11A/RPL11B/uL5. Interaction of this complex with KAP104 allows the nuclear import of the heterotrimer (PubMed:23118189).</text>
</comment>
<comment type="interaction">
    <interactant intactId="EBI-15398">
        <id>P26321</id>
    </interactant>
    <interactant intactId="EBI-12105">
        <id>Q02892</id>
        <label>NOG1</label>
    </interactant>
    <organismsDiffer>false</organismsDiffer>
    <experiments>2</experiments>
</comment>
<comment type="subcellular location">
    <subcellularLocation>
        <location evidence="1">Cytoplasm</location>
    </subcellularLocation>
    <subcellularLocation>
        <location evidence="2">Nucleus</location>
    </subcellularLocation>
    <text evidence="2">The SYO1-uL5-uL18 complex is transported into the nucleus by KAP104.</text>
</comment>
<comment type="similarity">
    <text evidence="7">Belongs to the universal ribosomal protein uL18 family.</text>
</comment>
<feature type="initiator methionine" description="Removed" evidence="4">
    <location>
        <position position="1"/>
    </location>
</feature>
<feature type="chain" id="PRO_0000131454" description="Large ribosomal subunit protein uL18">
    <location>
        <begin position="2"/>
        <end position="297"/>
    </location>
</feature>
<feature type="modified residue" description="Phosphoserine" evidence="11">
    <location>
        <position position="167"/>
    </location>
</feature>
<feature type="modified residue" description="Phosphoserine" evidence="11">
    <location>
        <position position="176"/>
    </location>
</feature>
<feature type="modified residue" description="Phosphoserine" evidence="10 11">
    <location>
        <position position="235"/>
    </location>
</feature>
<feature type="cross-link" description="Glycyl lysine isopeptide (Lys-Gly) (interchain with G-Cter in ubiquitin)" evidence="12">
    <location>
        <position position="164"/>
    </location>
</feature>
<feature type="sequence conflict" description="In Ref. 6; AA sequence." evidence="7" ref="6">
    <original>T</original>
    <variation>Y</variation>
    <location>
        <position position="18"/>
    </location>
</feature>
<feature type="sequence conflict" description="In Ref. 1; AAA35234 and 2; AAA35236." evidence="7" ref="1 2">
    <original>K</original>
    <variation>R</variation>
    <location>
        <position position="112"/>
    </location>
</feature>
<feature type="strand" evidence="13">
    <location>
        <begin position="4"/>
        <end position="7"/>
    </location>
</feature>
<feature type="helix" evidence="14">
    <location>
        <begin position="10"/>
        <end position="14"/>
    </location>
</feature>
<feature type="helix" evidence="14">
    <location>
        <begin position="21"/>
        <end position="24"/>
    </location>
</feature>
<feature type="helix" evidence="14">
    <location>
        <begin position="30"/>
        <end position="37"/>
    </location>
</feature>
<feature type="helix" evidence="14">
    <location>
        <begin position="41"/>
        <end position="43"/>
    </location>
</feature>
<feature type="strand" evidence="14">
    <location>
        <begin position="50"/>
        <end position="56"/>
    </location>
</feature>
<feature type="strand" evidence="14">
    <location>
        <begin position="59"/>
        <end position="68"/>
    </location>
</feature>
<feature type="strand" evidence="14">
    <location>
        <begin position="71"/>
        <end position="79"/>
    </location>
</feature>
<feature type="helix" evidence="14">
    <location>
        <begin position="80"/>
        <end position="86"/>
    </location>
</feature>
<feature type="strand" evidence="15">
    <location>
        <begin position="92"/>
        <end position="94"/>
    </location>
</feature>
<feature type="helix" evidence="14">
    <location>
        <begin position="95"/>
        <end position="112"/>
    </location>
</feature>
<feature type="strand" evidence="14">
    <location>
        <begin position="116"/>
        <end position="118"/>
    </location>
</feature>
<feature type="strand" evidence="14">
    <location>
        <begin position="136"/>
        <end position="138"/>
    </location>
</feature>
<feature type="strand" evidence="14">
    <location>
        <begin position="145"/>
        <end position="147"/>
    </location>
</feature>
<feature type="helix" evidence="14">
    <location>
        <begin position="159"/>
        <end position="168"/>
    </location>
</feature>
<feature type="helix" evidence="13">
    <location>
        <begin position="177"/>
        <end position="179"/>
    </location>
</feature>
<feature type="strand" evidence="15">
    <location>
        <begin position="180"/>
        <end position="184"/>
    </location>
</feature>
<feature type="turn" evidence="14">
    <location>
        <begin position="185"/>
        <end position="188"/>
    </location>
</feature>
<feature type="helix" evidence="14">
    <location>
        <begin position="192"/>
        <end position="199"/>
    </location>
</feature>
<feature type="helix" evidence="14">
    <location>
        <begin position="202"/>
        <end position="214"/>
    </location>
</feature>
<feature type="helix" evidence="14">
    <location>
        <begin position="216"/>
        <end position="221"/>
    </location>
</feature>
<feature type="helix" evidence="14">
    <location>
        <begin position="224"/>
        <end position="228"/>
    </location>
</feature>
<feature type="helix" evidence="14">
    <location>
        <begin position="233"/>
        <end position="235"/>
    </location>
</feature>
<feature type="helix" evidence="14">
    <location>
        <begin position="236"/>
        <end position="249"/>
    </location>
</feature>
<feature type="helix" evidence="14">
    <location>
        <begin position="262"/>
        <end position="270"/>
    </location>
</feature>
<feature type="strand" evidence="14">
    <location>
        <begin position="271"/>
        <end position="273"/>
    </location>
</feature>
<feature type="helix" evidence="14">
    <location>
        <begin position="279"/>
        <end position="292"/>
    </location>
</feature>
<feature type="turn" evidence="14">
    <location>
        <begin position="293"/>
        <end position="296"/>
    </location>
</feature>
<reference key="1">
    <citation type="journal article" date="1991" name="J. Biol. Chem.">
        <title>Structure of the yeast ribosomal 5 S RNA-binding protein YL3.</title>
        <authorList>
            <person name="Tang B."/>
            <person name="Nazar R.N."/>
        </authorList>
    </citation>
    <scope>NUCLEOTIDE SEQUENCE [GENOMIC DNA]</scope>
    <source>
        <strain>ATCC 204508 / S288c</strain>
    </source>
</reference>
<reference key="2">
    <citation type="journal article" date="1992" name="J. Biol. Chem.">
        <title>Unbalanced regulation of the ribosomal 5 S RNA-binding protein in Saccharomyces cerevisiae expressing mutant 5 S rRNAs.</title>
        <authorList>
            <person name="Tang B."/>
            <person name="Nazar R.N."/>
        </authorList>
    </citation>
    <scope>NUCLEOTIDE SEQUENCE [GENOMIC DNA]</scope>
</reference>
<reference key="3">
    <citation type="journal article" date="1993" name="Mol. Cell. Biol.">
        <title>Yeast ribosomal protein L1 is required for the stability of newly synthesized 5S rRNA and the assembly of 60S ribosomal subunits.</title>
        <authorList>
            <person name="Deshmukh M.P."/>
            <person name="Tsay Y.F."/>
            <person name="Paulovich A.G."/>
            <person name="Woolford J.L. Jr."/>
        </authorList>
    </citation>
    <scope>NUCLEOTIDE SEQUENCE [GENOMIC DNA]</scope>
</reference>
<reference key="4">
    <citation type="journal article" date="1997" name="Nature">
        <title>The nucleotide sequence of Saccharomyces cerevisiae chromosome XVI.</title>
        <authorList>
            <person name="Bussey H."/>
            <person name="Storms R.K."/>
            <person name="Ahmed A."/>
            <person name="Albermann K."/>
            <person name="Allen E."/>
            <person name="Ansorge W."/>
            <person name="Araujo R."/>
            <person name="Aparicio A."/>
            <person name="Barrell B.G."/>
            <person name="Badcock K."/>
            <person name="Benes V."/>
            <person name="Botstein D."/>
            <person name="Bowman S."/>
            <person name="Brueckner M."/>
            <person name="Carpenter J."/>
            <person name="Cherry J.M."/>
            <person name="Chung E."/>
            <person name="Churcher C.M."/>
            <person name="Coster F."/>
            <person name="Davis K."/>
            <person name="Davis R.W."/>
            <person name="Dietrich F.S."/>
            <person name="Delius H."/>
            <person name="DiPaolo T."/>
            <person name="Dubois E."/>
            <person name="Duesterhoeft A."/>
            <person name="Duncan M."/>
            <person name="Floeth M."/>
            <person name="Fortin N."/>
            <person name="Friesen J.D."/>
            <person name="Fritz C."/>
            <person name="Goffeau A."/>
            <person name="Hall J."/>
            <person name="Hebling U."/>
            <person name="Heumann K."/>
            <person name="Hilbert H."/>
            <person name="Hillier L.W."/>
            <person name="Hunicke-Smith S."/>
            <person name="Hyman R.W."/>
            <person name="Johnston M."/>
            <person name="Kalman S."/>
            <person name="Kleine K."/>
            <person name="Komp C."/>
            <person name="Kurdi O."/>
            <person name="Lashkari D."/>
            <person name="Lew H."/>
            <person name="Lin A."/>
            <person name="Lin D."/>
            <person name="Louis E.J."/>
            <person name="Marathe R."/>
            <person name="Messenguy F."/>
            <person name="Mewes H.-W."/>
            <person name="Mirtipati S."/>
            <person name="Moestl D."/>
            <person name="Mueller-Auer S."/>
            <person name="Namath A."/>
            <person name="Nentwich U."/>
            <person name="Oefner P."/>
            <person name="Pearson D."/>
            <person name="Petel F.X."/>
            <person name="Pohl T.M."/>
            <person name="Purnelle B."/>
            <person name="Rajandream M.A."/>
            <person name="Rechmann S."/>
            <person name="Rieger M."/>
            <person name="Riles L."/>
            <person name="Roberts D."/>
            <person name="Schaefer M."/>
            <person name="Scharfe M."/>
            <person name="Scherens B."/>
            <person name="Schramm S."/>
            <person name="Schroeder M."/>
            <person name="Sdicu A.-M."/>
            <person name="Tettelin H."/>
            <person name="Urrestarazu L.A."/>
            <person name="Ushinsky S."/>
            <person name="Vierendeels F."/>
            <person name="Vissers S."/>
            <person name="Voss H."/>
            <person name="Walsh S.V."/>
            <person name="Wambutt R."/>
            <person name="Wang Y."/>
            <person name="Wedler E."/>
            <person name="Wedler H."/>
            <person name="Winnett E."/>
            <person name="Zhong W.-W."/>
            <person name="Zollner A."/>
            <person name="Vo D.H."/>
            <person name="Hani J."/>
        </authorList>
    </citation>
    <scope>NUCLEOTIDE SEQUENCE [LARGE SCALE GENOMIC DNA]</scope>
    <source>
        <strain>ATCC 204508 / S288c</strain>
    </source>
</reference>
<reference key="5">
    <citation type="journal article" date="2014" name="G3 (Bethesda)">
        <title>The reference genome sequence of Saccharomyces cerevisiae: Then and now.</title>
        <authorList>
            <person name="Engel S.R."/>
            <person name="Dietrich F.S."/>
            <person name="Fisk D.G."/>
            <person name="Binkley G."/>
            <person name="Balakrishnan R."/>
            <person name="Costanzo M.C."/>
            <person name="Dwight S.S."/>
            <person name="Hitz B.C."/>
            <person name="Karra K."/>
            <person name="Nash R.S."/>
            <person name="Weng S."/>
            <person name="Wong E.D."/>
            <person name="Lloyd P."/>
            <person name="Skrzypek M.S."/>
            <person name="Miyasato S.R."/>
            <person name="Simison M."/>
            <person name="Cherry J.M."/>
        </authorList>
    </citation>
    <scope>GENOME REANNOTATION</scope>
    <source>
        <strain>ATCC 204508 / S288c</strain>
    </source>
</reference>
<reference key="6">
    <citation type="journal article" date="1979" name="Eur. J. Biochem.">
        <title>The 5-S RNA binding protein from yeast (Saccharomyces cerevisiae) ribosomes. Evolution of the eukaryotic 5-S RNA binding protein.</title>
        <authorList>
            <person name="Nazar R.N."/>
            <person name="Yaguchi M."/>
            <person name="Willick G.E."/>
            <person name="Rollin C.F."/>
            <person name="Roy C."/>
        </authorList>
    </citation>
    <scope>PROTEIN SEQUENCE OF 2-31 AND 219-253</scope>
</reference>
<reference key="7">
    <citation type="journal article" date="1998" name="Yeast">
        <title>The list of cytoplasmic ribosomal proteins of Saccharomyces cerevisiae.</title>
        <authorList>
            <person name="Planta R.J."/>
            <person name="Mager W.H."/>
        </authorList>
    </citation>
    <scope>NOMENCLATURE</scope>
    <scope>SUBUNIT</scope>
</reference>
<reference key="8">
    <citation type="journal article" date="2003" name="Nature">
        <title>Global analysis of protein localization in budding yeast.</title>
        <authorList>
            <person name="Huh W.-K."/>
            <person name="Falvo J.V."/>
            <person name="Gerke L.C."/>
            <person name="Carroll A.S."/>
            <person name="Howson R.W."/>
            <person name="Weissman J.S."/>
            <person name="O'Shea E.K."/>
        </authorList>
    </citation>
    <scope>SUBCELLULAR LOCATION [LARGE SCALE ANALYSIS]</scope>
</reference>
<reference key="9">
    <citation type="journal article" date="2007" name="J. Proteome Res.">
        <title>Large-scale phosphorylation analysis of alpha-factor-arrested Saccharomyces cerevisiae.</title>
        <authorList>
            <person name="Li X."/>
            <person name="Gerber S.A."/>
            <person name="Rudner A.D."/>
            <person name="Beausoleil S.A."/>
            <person name="Haas W."/>
            <person name="Villen J."/>
            <person name="Elias J.E."/>
            <person name="Gygi S.P."/>
        </authorList>
    </citation>
    <scope>PHOSPHORYLATION [LARGE SCALE ANALYSIS] AT SER-235</scope>
    <scope>IDENTIFICATION BY MASS SPECTROMETRY [LARGE SCALE ANALYSIS]</scope>
    <source>
        <strain>ADR376</strain>
    </source>
</reference>
<reference key="10">
    <citation type="journal article" date="2007" name="Proc. Natl. Acad. Sci. U.S.A.">
        <title>Analysis of phosphorylation sites on proteins from Saccharomyces cerevisiae by electron transfer dissociation (ETD) mass spectrometry.</title>
        <authorList>
            <person name="Chi A."/>
            <person name="Huttenhower C."/>
            <person name="Geer L.Y."/>
            <person name="Coon J.J."/>
            <person name="Syka J.E.P."/>
            <person name="Bai D.L."/>
            <person name="Shabanowitz J."/>
            <person name="Burke D.J."/>
            <person name="Troyanskaya O.G."/>
            <person name="Hunt D.F."/>
        </authorList>
    </citation>
    <scope>IDENTIFICATION BY MASS SPECTROMETRY [LARGE SCALE ANALYSIS]</scope>
</reference>
<reference key="11">
    <citation type="journal article" date="2009" name="Science">
        <title>Global analysis of Cdk1 substrate phosphorylation sites provides insights into evolution.</title>
        <authorList>
            <person name="Holt L.J."/>
            <person name="Tuch B.B."/>
            <person name="Villen J."/>
            <person name="Johnson A.D."/>
            <person name="Gygi S.P."/>
            <person name="Morgan D.O."/>
        </authorList>
    </citation>
    <scope>PHOSPHORYLATION [LARGE SCALE ANALYSIS] AT SER-167; SER-176 AND SER-235</scope>
    <scope>IDENTIFICATION BY MASS SPECTROMETRY [LARGE SCALE ANALYSIS]</scope>
</reference>
<reference key="12">
    <citation type="journal article" date="2012" name="Proc. Natl. Acad. Sci. U.S.A.">
        <title>N-terminal acetylome analyses and functional insights of the N-terminal acetyltransferase NatB.</title>
        <authorList>
            <person name="Van Damme P."/>
            <person name="Lasa M."/>
            <person name="Polevoda B."/>
            <person name="Gazquez C."/>
            <person name="Elosegui-Artola A."/>
            <person name="Kim D.S."/>
            <person name="De Juan-Pardo E."/>
            <person name="Demeyer K."/>
            <person name="Hole K."/>
            <person name="Larrea E."/>
            <person name="Timmerman E."/>
            <person name="Prieto J."/>
            <person name="Arnesen T."/>
            <person name="Sherman F."/>
            <person name="Gevaert K."/>
            <person name="Aldabe R."/>
        </authorList>
    </citation>
    <scope>IDENTIFICATION BY MASS SPECTROMETRY [LARGE SCALE ANALYSIS]</scope>
</reference>
<reference key="13">
    <citation type="journal article" date="2012" name="Proteomics">
        <title>Sites of ubiquitin attachment in Saccharomyces cerevisiae.</title>
        <authorList>
            <person name="Starita L.M."/>
            <person name="Lo R.S."/>
            <person name="Eng J.K."/>
            <person name="von Haller P.D."/>
            <person name="Fields S."/>
        </authorList>
    </citation>
    <scope>UBIQUITINATION [LARGE SCALE ANALYSIS] AT LYS-164</scope>
    <scope>IDENTIFICATION BY MASS SPECTROMETRY [LARGE SCALE ANALYSIS]</scope>
</reference>
<reference key="14">
    <citation type="journal article" date="2012" name="Science">
        <title>Synchronizing nuclear import of ribosomal proteins with ribosome assembly.</title>
        <authorList>
            <person name="Kressler D."/>
            <person name="Bange G."/>
            <person name="Ogawa Y."/>
            <person name="Stjepanovic G."/>
            <person name="Bradatsch B."/>
            <person name="Pratte D."/>
            <person name="Amlacher S."/>
            <person name="Strauss D."/>
            <person name="Yoneda Y."/>
            <person name="Katahira J."/>
            <person name="Sinning I."/>
            <person name="Hurt E."/>
        </authorList>
    </citation>
    <scope>INTERACTION WITH RPL11A; RPL11B AND SYO1</scope>
    <scope>SUBCELLULAR LOCATION</scope>
</reference>
<reference key="15">
    <citation type="journal article" date="2014" name="Curr. Opin. Struct. Biol.">
        <title>A new system for naming ribosomal proteins.</title>
        <authorList>
            <person name="Ban N."/>
            <person name="Beckmann R."/>
            <person name="Cate J.H.D."/>
            <person name="Dinman J.D."/>
            <person name="Dragon F."/>
            <person name="Ellis S.R."/>
            <person name="Lafontaine D.L.J."/>
            <person name="Lindahl L."/>
            <person name="Liljas A."/>
            <person name="Lipton J.M."/>
            <person name="McAlear M.A."/>
            <person name="Moore P.B."/>
            <person name="Noller H.F."/>
            <person name="Ortega J."/>
            <person name="Panse V.G."/>
            <person name="Ramakrishnan V."/>
            <person name="Spahn C.M.T."/>
            <person name="Steitz T.A."/>
            <person name="Tchorzewski M."/>
            <person name="Tollervey D."/>
            <person name="Warren A.J."/>
            <person name="Williamson J.R."/>
            <person name="Wilson D."/>
            <person name="Yonath A."/>
            <person name="Yusupov M."/>
        </authorList>
    </citation>
    <scope>NOMENCLATURE</scope>
</reference>
<reference key="16">
    <citation type="journal article" date="2023" name="Nat. Struct. Mol. Biol.">
        <title>Structure of nascent 5S RNPs at the crossroad between ribosome assembly and MDM2-p53 pathways.</title>
        <authorList>
            <person name="Castillo Duque de Estrada N.M."/>
            <person name="Thoms M."/>
            <person name="Flemming D."/>
            <person name="Hammaren H.M."/>
            <person name="Buschauer R."/>
            <person name="Ameismeier M."/>
            <person name="Bassler J."/>
            <person name="Beck M."/>
            <person name="Beckmann R."/>
            <person name="Hurt E."/>
        </authorList>
    </citation>
    <scope>SUBUNIT</scope>
</reference>
<reference key="17">
    <citation type="journal article" date="2001" name="Cell">
        <title>Structure of the 80S ribosome from Saccharomyces cerevisiae -- tRNA-ribosome and subunit-subunit interactions.</title>
        <authorList>
            <person name="Spahn C.M.T."/>
            <person name="Beckmann R."/>
            <person name="Eswar N."/>
            <person name="Penczek P.A."/>
            <person name="Sali A."/>
            <person name="Blobel G."/>
            <person name="Frank J."/>
        </authorList>
    </citation>
    <scope>3D-STRUCTURE MODELING OF 11-232</scope>
    <scope>ELECTRON MICROSCOPY</scope>
</reference>
<reference key="18">
    <citation type="journal article" date="2004" name="EMBO J.">
        <title>Domain movements of elongation factor eEF2 and the eukaryotic 80S ribosome facilitate tRNA translocation.</title>
        <authorList>
            <person name="Spahn C.M.T."/>
            <person name="Gomez-Lorenzo M.G."/>
            <person name="Grassucci R.A."/>
            <person name="Joergensen R."/>
            <person name="Andersen G.R."/>
            <person name="Beckmann R."/>
            <person name="Penczek P.A."/>
            <person name="Ballesta J.P.G."/>
            <person name="Frank J."/>
        </authorList>
    </citation>
    <scope>3D-STRUCTURE MODELING OF 11-232</scope>
    <scope>ELECTRON MICROSCOPY</scope>
</reference>
<reference key="19">
    <citation type="journal article" date="2010" name="Science">
        <title>Crystal structure of the eukaryotic ribosome.</title>
        <authorList>
            <person name="Ben-Shem A."/>
            <person name="Jenner L."/>
            <person name="Yusupova G."/>
            <person name="Yusupov M."/>
        </authorList>
    </citation>
    <scope>X-RAY CRYSTALLOGRAPHY (4.0 ANGSTROMS) OF 80S RIBOSOME</scope>
</reference>
<reference key="20">
    <citation type="journal article" date="2011" name="Science">
        <title>The structure of the eukaryotic ribosome at 3.0 A resolution.</title>
        <authorList>
            <person name="Ben-Shem A."/>
            <person name="Garreau de Loubresse N."/>
            <person name="Melnikov S."/>
            <person name="Jenner L."/>
            <person name="Yusupova G."/>
            <person name="Yusupov M."/>
        </authorList>
    </citation>
    <scope>X-RAY CRYSTALLOGRAPHY (3.0 ANGSTROMS) OF 80S RIBOSOME</scope>
    <scope>SUBUNIT</scope>
    <scope>SUBCELLULAR LOCATION</scope>
</reference>